<evidence type="ECO:0000250" key="1"/>
<evidence type="ECO:0000250" key="2">
    <source>
        <dbReference type="UniProtKB" id="Q86SG6"/>
    </source>
</evidence>
<evidence type="ECO:0000255" key="3">
    <source>
        <dbReference type="PROSITE-ProRule" id="PRU00159"/>
    </source>
</evidence>
<evidence type="ECO:0000255" key="4">
    <source>
        <dbReference type="PROSITE-ProRule" id="PRU10027"/>
    </source>
</evidence>
<evidence type="ECO:0000256" key="5">
    <source>
        <dbReference type="SAM" id="MobiDB-lite"/>
    </source>
</evidence>
<evidence type="ECO:0000269" key="6">
    <source>
    </source>
</evidence>
<evidence type="ECO:0000269" key="7">
    <source>
    </source>
</evidence>
<evidence type="ECO:0000269" key="8">
    <source>
    </source>
</evidence>
<evidence type="ECO:0000269" key="9">
    <source>
    </source>
</evidence>
<evidence type="ECO:0000269" key="10">
    <source>
    </source>
</evidence>
<evidence type="ECO:0000269" key="11">
    <source>
    </source>
</evidence>
<evidence type="ECO:0000305" key="12"/>
<proteinExistence type="evidence at protein level"/>
<comment type="function">
    <text evidence="8">Required for renal tubular integrity. May regulate local cytoskeletal structure in kidney tubule epithelial cells. May regulate ciliary biogenesis through targeting of proteins to the cilia. Plays a role in organogenesis and is involved in the regulation of the Hippo signaling pathway.</text>
</comment>
<comment type="catalytic activity">
    <reaction>
        <text>L-seryl-[protein] + ATP = O-phospho-L-seryl-[protein] + ADP + H(+)</text>
        <dbReference type="Rhea" id="RHEA:17989"/>
        <dbReference type="Rhea" id="RHEA-COMP:9863"/>
        <dbReference type="Rhea" id="RHEA-COMP:11604"/>
        <dbReference type="ChEBI" id="CHEBI:15378"/>
        <dbReference type="ChEBI" id="CHEBI:29999"/>
        <dbReference type="ChEBI" id="CHEBI:30616"/>
        <dbReference type="ChEBI" id="CHEBI:83421"/>
        <dbReference type="ChEBI" id="CHEBI:456216"/>
        <dbReference type="EC" id="2.7.11.1"/>
    </reaction>
</comment>
<comment type="catalytic activity">
    <reaction>
        <text>L-threonyl-[protein] + ATP = O-phospho-L-threonyl-[protein] + ADP + H(+)</text>
        <dbReference type="Rhea" id="RHEA:46608"/>
        <dbReference type="Rhea" id="RHEA-COMP:11060"/>
        <dbReference type="Rhea" id="RHEA-COMP:11605"/>
        <dbReference type="ChEBI" id="CHEBI:15378"/>
        <dbReference type="ChEBI" id="CHEBI:30013"/>
        <dbReference type="ChEBI" id="CHEBI:30616"/>
        <dbReference type="ChEBI" id="CHEBI:61977"/>
        <dbReference type="ChEBI" id="CHEBI:456216"/>
        <dbReference type="EC" id="2.7.11.1"/>
    </reaction>
</comment>
<comment type="cofactor">
    <cofactor evidence="1">
        <name>Mg(2+)</name>
        <dbReference type="ChEBI" id="CHEBI:18420"/>
    </cofactor>
</comment>
<comment type="subunit">
    <text evidence="2 9 10">Interacts with PKD2; may regulate PKD2 targeting to the cilium (PubMed:18235101). Interacts with ANKS6 (By similarity). Component of a complex containing at least ANKS6, INVS, NEK8 and NPHP3 (By similarity). ANKS6 may organize complex assembly by linking INVS and NPHP3 to NEK8 and INVS may target the complex to the proximal ciliary axoneme (By similarity). Interacts with ANKS3 (PubMed:25671767).</text>
</comment>
<comment type="interaction">
    <interactant intactId="EBI-4282339">
        <id>Q91ZR4</id>
    </interactant>
    <interactant intactId="EBI-4281337">
        <id>O89019</id>
        <label>Invs</label>
    </interactant>
    <organismsDiffer>false</organismsDiffer>
    <experiments>2</experiments>
</comment>
<comment type="subcellular location">
    <subcellularLocation>
        <location evidence="7">Cytoplasm</location>
    </subcellularLocation>
    <subcellularLocation>
        <location evidence="7">Cytoplasm</location>
        <location evidence="7">Cytoskeleton</location>
    </subcellularLocation>
    <subcellularLocation>
        <location evidence="7">Cell projection</location>
        <location evidence="7">Cilium</location>
    </subcellularLocation>
    <subcellularLocation>
        <location evidence="2">Cytoplasm</location>
        <location evidence="2">Cytoskeleton</location>
        <location evidence="2">Microtubule organizing center</location>
        <location evidence="2">Centrosome</location>
    </subcellularLocation>
    <subcellularLocation>
        <location evidence="2">Cytoplasm</location>
        <location evidence="2">Cytoskeleton</location>
        <location evidence="2">Cilium axoneme</location>
    </subcellularLocation>
    <text evidence="7">Predominantly cytoplasmic. Localizes to the proximal region of the primary cilium and is not observed in dividing cells.</text>
</comment>
<comment type="tissue specificity">
    <text>Kidney, liver, and testis.</text>
</comment>
<comment type="disease">
    <text evidence="6 11">A spontaneous mutation in Nek8 is responsible for the juvenile cystic kidney disease (jck) phenotype, which resembles human autosomal recessive polycystic kidney disease. Affected mice have grossly enlarged, spongy-appearing kidney. Focal cysts are evident as early as three days of life. The disease is progressive, the mice are fertile and generally survive to four or more months of age.</text>
</comment>
<comment type="similarity">
    <text evidence="12">Belongs to the protein kinase superfamily. NEK Ser/Thr protein kinase family. NIMA subfamily.</text>
</comment>
<protein>
    <recommendedName>
        <fullName>Serine/threonine-protein kinase Nek8</fullName>
        <ecNumber>2.7.11.1</ecNumber>
    </recommendedName>
    <alternativeName>
        <fullName>Never in mitosis A-related kinase 8</fullName>
        <shortName>NimA-related protein kinase 8</shortName>
    </alternativeName>
</protein>
<feature type="chain" id="PRO_0000086433" description="Serine/threonine-protein kinase Nek8">
    <location>
        <begin position="1"/>
        <end position="698"/>
    </location>
</feature>
<feature type="domain" description="Protein kinase" evidence="3">
    <location>
        <begin position="4"/>
        <end position="258"/>
    </location>
</feature>
<feature type="repeat" description="RCC1 1">
    <location>
        <begin position="416"/>
        <end position="467"/>
    </location>
</feature>
<feature type="repeat" description="RCC1 2">
    <location>
        <begin position="468"/>
        <end position="519"/>
    </location>
</feature>
<feature type="repeat" description="RCC1 3">
    <location>
        <begin position="520"/>
        <end position="585"/>
    </location>
</feature>
<feature type="repeat" description="RCC1 4">
    <location>
        <begin position="586"/>
        <end position="637"/>
    </location>
</feature>
<feature type="repeat" description="RCC1 5">
    <location>
        <begin position="638"/>
        <end position="690"/>
    </location>
</feature>
<feature type="region of interest" description="Disordered" evidence="5">
    <location>
        <begin position="278"/>
        <end position="309"/>
    </location>
</feature>
<feature type="compositionally biased region" description="Low complexity" evidence="5">
    <location>
        <begin position="288"/>
        <end position="309"/>
    </location>
</feature>
<feature type="active site" description="Proton acceptor" evidence="3 4">
    <location>
        <position position="128"/>
    </location>
</feature>
<feature type="binding site" evidence="3">
    <location>
        <begin position="10"/>
        <end position="18"/>
    </location>
    <ligand>
        <name>ATP</name>
        <dbReference type="ChEBI" id="CHEBI:30616"/>
    </ligand>
</feature>
<feature type="binding site" evidence="3">
    <location>
        <position position="33"/>
    </location>
    <ligand>
        <name>ATP</name>
        <dbReference type="ChEBI" id="CHEBI:30616"/>
    </ligand>
</feature>
<feature type="modified residue" description="Phosphothreonine; by autocatalysis" evidence="1">
    <location>
        <position position="162"/>
    </location>
</feature>
<feature type="sequence variant" description="In jck." evidence="6">
    <original>G</original>
    <variation>V</variation>
    <location>
        <position position="448"/>
    </location>
</feature>
<feature type="mutagenesis site" description="Results in enlarged multinucleated cells." evidence="6">
    <original>K</original>
    <variation>M</variation>
    <location>
        <position position="33"/>
    </location>
</feature>
<feature type="mutagenesis site" description="Shows a defect in ciliary localization with no apparent effect on ciliation, mitosis or centriole number." evidence="8">
    <original>L</original>
    <variation>F</variation>
    <location>
        <position position="336"/>
    </location>
</feature>
<feature type="mutagenesis site" description="Shows a defect in ciliary localization with no apparent effect on ciliation, mitosis or centriole number." evidence="8">
    <original>H</original>
    <variation>Y</variation>
    <location>
        <position position="431"/>
    </location>
</feature>
<feature type="mutagenesis site" description="Shows a defect in ciliary localization with no apparent effect on ciliation, mitosis or centriole number." evidence="8">
    <original>A</original>
    <variation>P</variation>
    <location>
        <position position="503"/>
    </location>
</feature>
<feature type="sequence conflict" description="In Ref. 2; BAE32535." evidence="12" ref="2">
    <original>G</original>
    <variation>D</variation>
    <location>
        <position position="326"/>
    </location>
</feature>
<feature type="sequence conflict" description="In Ref. 2; BAE32535." evidence="12" ref="2">
    <original>N</original>
    <variation>D</variation>
    <location>
        <position position="528"/>
    </location>
</feature>
<keyword id="KW-0067">ATP-binding</keyword>
<keyword id="KW-0966">Cell projection</keyword>
<keyword id="KW-0969">Cilium</keyword>
<keyword id="KW-0963">Cytoplasm</keyword>
<keyword id="KW-0206">Cytoskeleton</keyword>
<keyword id="KW-0225">Disease variant</keyword>
<keyword id="KW-0418">Kinase</keyword>
<keyword id="KW-0460">Magnesium</keyword>
<keyword id="KW-0479">Metal-binding</keyword>
<keyword id="KW-0547">Nucleotide-binding</keyword>
<keyword id="KW-0597">Phosphoprotein</keyword>
<keyword id="KW-1185">Reference proteome</keyword>
<keyword id="KW-0677">Repeat</keyword>
<keyword id="KW-0723">Serine/threonine-protein kinase</keyword>
<keyword id="KW-0808">Transferase</keyword>
<sequence length="698" mass="75265">MEKYERIRVVGRGAFGIVHLCLRKADQKLVILKQIPVEQMTKEERQAAQNECQVLKLLNHPNVIEYYENFLEDKALMIAMEYAPGGTLAEFIQKRCNSLLEEETILHFFVQILLALHHVHTHLILHRDLKTQNILLDKHRMVVKIGDFGISKILSSKSKAYTVVGTPCYISPELCEGKPYNQKSDIWALGCVLYELASLKRAFEAANLPALVLKIMSGTFAPISDRYSPELRQLVLSLLSLEPAQRPPLSHIMAQPLCIRALLNIHTDVGSVRMRRAEKSLTPGPPIASGSTGSRATSARCRGVPRGPVRPAIPPPLSSVYAWGGGLSSPLRLPMLNTEVVQVAAGRTQKAGVTRSGRLILWEAPPLGAGGGTLLPGAVELPQPQFVSRFLEGQSGVTIKHVACGDLFTACLTDRGIIMTFGSGSNGCLGHGNLTDISQPTIVEALLGYEMVQVACGASHVLALSTDGELFAWGRGDGGRLGLGTRESHNCPQQVPVAPGQEAQRVVCGIDSSMILTSPGRVLACGSNRFNKLGLDHLSLDEEPVPYQQVEEALSFTPLGSAPLDQEPLLCVDLGTAHSAAITASGDCYTFGSNQHGQLGTSSRRVSRAPCRVQGLEGIKMVMVACGDAFTVAVGAEGEVYSWGKGTRGRLGRRDEDAGLPRPVQLDETHPYMVTSVSCCHGNTLLAVRSVTDEPVPP</sequence>
<accession>Q91ZR4</accession>
<accession>Q3U498</accession>
<accession>Q9D685</accession>
<gene>
    <name type="primary">Nek8</name>
    <name type="synonym">Jck</name>
</gene>
<reference key="1">
    <citation type="journal article" date="2002" name="Development">
        <title>A defect in a novel Nek-family kinase causes cystic kidney disease in the mouse and in zebrafish.</title>
        <authorList>
            <person name="Liu S."/>
            <person name="Lu W."/>
            <person name="Obara T."/>
            <person name="Kuida S."/>
            <person name="Lehoczky J."/>
            <person name="Dewar K."/>
            <person name="Drummond I.A."/>
            <person name="Beier D.R."/>
        </authorList>
    </citation>
    <scope>NUCLEOTIDE SEQUENCE [MRNA]</scope>
    <scope>MUTAGENESIS OF LYS-33</scope>
    <scope>INVOLVEMENT IN JCK</scope>
    <scope>VARIANT JCK VAL-448</scope>
    <source>
        <strain>C57BL/6J</strain>
    </source>
</reference>
<reference key="2">
    <citation type="journal article" date="2005" name="Science">
        <title>The transcriptional landscape of the mammalian genome.</title>
        <authorList>
            <person name="Carninci P."/>
            <person name="Kasukawa T."/>
            <person name="Katayama S."/>
            <person name="Gough J."/>
            <person name="Frith M.C."/>
            <person name="Maeda N."/>
            <person name="Oyama R."/>
            <person name="Ravasi T."/>
            <person name="Lenhard B."/>
            <person name="Wells C."/>
            <person name="Kodzius R."/>
            <person name="Shimokawa K."/>
            <person name="Bajic V.B."/>
            <person name="Brenner S.E."/>
            <person name="Batalov S."/>
            <person name="Forrest A.R."/>
            <person name="Zavolan M."/>
            <person name="Davis M.J."/>
            <person name="Wilming L.G."/>
            <person name="Aidinis V."/>
            <person name="Allen J.E."/>
            <person name="Ambesi-Impiombato A."/>
            <person name="Apweiler R."/>
            <person name="Aturaliya R.N."/>
            <person name="Bailey T.L."/>
            <person name="Bansal M."/>
            <person name="Baxter L."/>
            <person name="Beisel K.W."/>
            <person name="Bersano T."/>
            <person name="Bono H."/>
            <person name="Chalk A.M."/>
            <person name="Chiu K.P."/>
            <person name="Choudhary V."/>
            <person name="Christoffels A."/>
            <person name="Clutterbuck D.R."/>
            <person name="Crowe M.L."/>
            <person name="Dalla E."/>
            <person name="Dalrymple B.P."/>
            <person name="de Bono B."/>
            <person name="Della Gatta G."/>
            <person name="di Bernardo D."/>
            <person name="Down T."/>
            <person name="Engstrom P."/>
            <person name="Fagiolini M."/>
            <person name="Faulkner G."/>
            <person name="Fletcher C.F."/>
            <person name="Fukushima T."/>
            <person name="Furuno M."/>
            <person name="Futaki S."/>
            <person name="Gariboldi M."/>
            <person name="Georgii-Hemming P."/>
            <person name="Gingeras T.R."/>
            <person name="Gojobori T."/>
            <person name="Green R.E."/>
            <person name="Gustincich S."/>
            <person name="Harbers M."/>
            <person name="Hayashi Y."/>
            <person name="Hensch T.K."/>
            <person name="Hirokawa N."/>
            <person name="Hill D."/>
            <person name="Huminiecki L."/>
            <person name="Iacono M."/>
            <person name="Ikeo K."/>
            <person name="Iwama A."/>
            <person name="Ishikawa T."/>
            <person name="Jakt M."/>
            <person name="Kanapin A."/>
            <person name="Katoh M."/>
            <person name="Kawasawa Y."/>
            <person name="Kelso J."/>
            <person name="Kitamura H."/>
            <person name="Kitano H."/>
            <person name="Kollias G."/>
            <person name="Krishnan S.P."/>
            <person name="Kruger A."/>
            <person name="Kummerfeld S.K."/>
            <person name="Kurochkin I.V."/>
            <person name="Lareau L.F."/>
            <person name="Lazarevic D."/>
            <person name="Lipovich L."/>
            <person name="Liu J."/>
            <person name="Liuni S."/>
            <person name="McWilliam S."/>
            <person name="Madan Babu M."/>
            <person name="Madera M."/>
            <person name="Marchionni L."/>
            <person name="Matsuda H."/>
            <person name="Matsuzawa S."/>
            <person name="Miki H."/>
            <person name="Mignone F."/>
            <person name="Miyake S."/>
            <person name="Morris K."/>
            <person name="Mottagui-Tabar S."/>
            <person name="Mulder N."/>
            <person name="Nakano N."/>
            <person name="Nakauchi H."/>
            <person name="Ng P."/>
            <person name="Nilsson R."/>
            <person name="Nishiguchi S."/>
            <person name="Nishikawa S."/>
            <person name="Nori F."/>
            <person name="Ohara O."/>
            <person name="Okazaki Y."/>
            <person name="Orlando V."/>
            <person name="Pang K.C."/>
            <person name="Pavan W.J."/>
            <person name="Pavesi G."/>
            <person name="Pesole G."/>
            <person name="Petrovsky N."/>
            <person name="Piazza S."/>
            <person name="Reed J."/>
            <person name="Reid J.F."/>
            <person name="Ring B.Z."/>
            <person name="Ringwald M."/>
            <person name="Rost B."/>
            <person name="Ruan Y."/>
            <person name="Salzberg S.L."/>
            <person name="Sandelin A."/>
            <person name="Schneider C."/>
            <person name="Schoenbach C."/>
            <person name="Sekiguchi K."/>
            <person name="Semple C.A."/>
            <person name="Seno S."/>
            <person name="Sessa L."/>
            <person name="Sheng Y."/>
            <person name="Shibata Y."/>
            <person name="Shimada H."/>
            <person name="Shimada K."/>
            <person name="Silva D."/>
            <person name="Sinclair B."/>
            <person name="Sperling S."/>
            <person name="Stupka E."/>
            <person name="Sugiura K."/>
            <person name="Sultana R."/>
            <person name="Takenaka Y."/>
            <person name="Taki K."/>
            <person name="Tammoja K."/>
            <person name="Tan S.L."/>
            <person name="Tang S."/>
            <person name="Taylor M.S."/>
            <person name="Tegner J."/>
            <person name="Teichmann S.A."/>
            <person name="Ueda H.R."/>
            <person name="van Nimwegen E."/>
            <person name="Verardo R."/>
            <person name="Wei C.L."/>
            <person name="Yagi K."/>
            <person name="Yamanishi H."/>
            <person name="Zabarovsky E."/>
            <person name="Zhu S."/>
            <person name="Zimmer A."/>
            <person name="Hide W."/>
            <person name="Bult C."/>
            <person name="Grimmond S.M."/>
            <person name="Teasdale R.D."/>
            <person name="Liu E.T."/>
            <person name="Brusic V."/>
            <person name="Quackenbush J."/>
            <person name="Wahlestedt C."/>
            <person name="Mattick J.S."/>
            <person name="Hume D.A."/>
            <person name="Kai C."/>
            <person name="Sasaki D."/>
            <person name="Tomaru Y."/>
            <person name="Fukuda S."/>
            <person name="Kanamori-Katayama M."/>
            <person name="Suzuki M."/>
            <person name="Aoki J."/>
            <person name="Arakawa T."/>
            <person name="Iida J."/>
            <person name="Imamura K."/>
            <person name="Itoh M."/>
            <person name="Kato T."/>
            <person name="Kawaji H."/>
            <person name="Kawagashira N."/>
            <person name="Kawashima T."/>
            <person name="Kojima M."/>
            <person name="Kondo S."/>
            <person name="Konno H."/>
            <person name="Nakano K."/>
            <person name="Ninomiya N."/>
            <person name="Nishio T."/>
            <person name="Okada M."/>
            <person name="Plessy C."/>
            <person name="Shibata K."/>
            <person name="Shiraki T."/>
            <person name="Suzuki S."/>
            <person name="Tagami M."/>
            <person name="Waki K."/>
            <person name="Watahiki A."/>
            <person name="Okamura-Oho Y."/>
            <person name="Suzuki H."/>
            <person name="Kawai J."/>
            <person name="Hayashizaki Y."/>
        </authorList>
    </citation>
    <scope>NUCLEOTIDE SEQUENCE [LARGE SCALE MRNA]</scope>
    <source>
        <strain>NOD</strain>
        <tissue>Dendritic cell</tissue>
    </source>
</reference>
<reference key="3">
    <citation type="journal article" date="2004" name="Genome Res.">
        <title>The status, quality, and expansion of the NIH full-length cDNA project: the Mammalian Gene Collection (MGC).</title>
        <authorList>
            <consortium name="The MGC Project Team"/>
        </authorList>
    </citation>
    <scope>NUCLEOTIDE SEQUENCE [LARGE SCALE MRNA]</scope>
    <source>
        <strain>C57BL/6J</strain>
        <tissue>Eye</tissue>
    </source>
</reference>
<reference key="4">
    <citation type="journal article" date="1993" name="Kidney Int.">
        <title>Juvenile cystic kidneys (jck): a new mouse mutation which causes polycystic kidneys.</title>
        <authorList>
            <person name="Atala A."/>
            <person name="Freeman M.R."/>
            <person name="Mandell J."/>
            <person name="Beier D.R."/>
        </authorList>
    </citation>
    <scope>INVOLVEMENT IN JCK</scope>
</reference>
<reference key="5">
    <citation type="journal article" date="2005" name="J. Am. Soc. Nephrol.">
        <title>NIMA-related kinases defective in murine models of polycystic kidney diseases localize to primary cilia and centrosomes.</title>
        <authorList>
            <person name="Mahjoub M.R."/>
            <person name="Trapp M.L."/>
            <person name="Quarmby L.M."/>
        </authorList>
    </citation>
    <scope>SUBCELLULAR LOCATION</scope>
</reference>
<reference key="6">
    <citation type="journal article" date="2008" name="J. Am. Soc. Nephrol.">
        <title>Nek8 regulates the expression and localization of polycystin-1 and polycystin-2.</title>
        <authorList>
            <person name="Sohara E."/>
            <person name="Luo Y."/>
            <person name="Zhang J."/>
            <person name="Manning D.K."/>
            <person name="Beier D.R."/>
            <person name="Zhou J."/>
        </authorList>
    </citation>
    <scope>INTERACTION WITH PKD2</scope>
</reference>
<reference key="7">
    <citation type="journal article" date="2008" name="J. Am. Soc. Nephrol.">
        <title>NEK8 mutations affect ciliary and centrosomal localization and may cause nephronophthisis.</title>
        <authorList>
            <person name="Otto E.A."/>
            <person name="Trapp M.L."/>
            <person name="Schultheiss U.T."/>
            <person name="Helou J."/>
            <person name="Quarmby L.M."/>
            <person name="Hildebrandt F."/>
        </authorList>
    </citation>
    <scope>MUTAGENESIS OF LEU-336; HIS-431 AND ALA-503</scope>
    <scope>FUNCTION</scope>
</reference>
<reference key="8">
    <citation type="journal article" date="2015" name="Kidney Int.">
        <title>Anks3 interacts with nephronophthisis proteins and is required for normal renal development.</title>
        <authorList>
            <person name="Yakulov T.A."/>
            <person name="Yasunaga T."/>
            <person name="Ramachandran H."/>
            <person name="Engel C."/>
            <person name="Mueller B."/>
            <person name="Hoff S."/>
            <person name="Dengjel J."/>
            <person name="Lienkamp S.S."/>
            <person name="Walz G."/>
        </authorList>
    </citation>
    <scope>INTERACTION WITH ANKS3</scope>
</reference>
<organism>
    <name type="scientific">Mus musculus</name>
    <name type="common">Mouse</name>
    <dbReference type="NCBI Taxonomy" id="10090"/>
    <lineage>
        <taxon>Eukaryota</taxon>
        <taxon>Metazoa</taxon>
        <taxon>Chordata</taxon>
        <taxon>Craniata</taxon>
        <taxon>Vertebrata</taxon>
        <taxon>Euteleostomi</taxon>
        <taxon>Mammalia</taxon>
        <taxon>Eutheria</taxon>
        <taxon>Euarchontoglires</taxon>
        <taxon>Glires</taxon>
        <taxon>Rodentia</taxon>
        <taxon>Myomorpha</taxon>
        <taxon>Muroidea</taxon>
        <taxon>Muridae</taxon>
        <taxon>Murinae</taxon>
        <taxon>Mus</taxon>
        <taxon>Mus</taxon>
    </lineage>
</organism>
<dbReference type="EC" id="2.7.11.1"/>
<dbReference type="EMBL" id="AF407579">
    <property type="protein sequence ID" value="AAL09675.1"/>
    <property type="molecule type" value="mRNA"/>
</dbReference>
<dbReference type="EMBL" id="AK154358">
    <property type="protein sequence ID" value="BAE32535.1"/>
    <property type="molecule type" value="mRNA"/>
</dbReference>
<dbReference type="EMBL" id="BC070457">
    <property type="protein sequence ID" value="AAH70457.1"/>
    <property type="molecule type" value="mRNA"/>
</dbReference>
<dbReference type="CCDS" id="CCDS25091.1"/>
<dbReference type="RefSeq" id="NP_543125.1">
    <property type="nucleotide sequence ID" value="NM_080849.3"/>
</dbReference>
<dbReference type="SMR" id="Q91ZR4"/>
<dbReference type="BioGRID" id="228327">
    <property type="interactions" value="3"/>
</dbReference>
<dbReference type="CORUM" id="Q91ZR4"/>
<dbReference type="FunCoup" id="Q91ZR4">
    <property type="interactions" value="102"/>
</dbReference>
<dbReference type="IntAct" id="Q91ZR4">
    <property type="interactions" value="1"/>
</dbReference>
<dbReference type="MINT" id="Q91ZR4"/>
<dbReference type="STRING" id="10090.ENSMUSP00000017549"/>
<dbReference type="PhosphoSitePlus" id="Q91ZR4"/>
<dbReference type="PaxDb" id="10090-ENSMUSP00000017549"/>
<dbReference type="ProteomicsDB" id="252804"/>
<dbReference type="Antibodypedia" id="26547">
    <property type="antibodies" value="285 antibodies from 26 providers"/>
</dbReference>
<dbReference type="DNASU" id="140859"/>
<dbReference type="Ensembl" id="ENSMUST00000017549.13">
    <property type="protein sequence ID" value="ENSMUSP00000017549.7"/>
    <property type="gene ID" value="ENSMUSG00000017405.15"/>
</dbReference>
<dbReference type="GeneID" id="140859"/>
<dbReference type="KEGG" id="mmu:140859"/>
<dbReference type="UCSC" id="uc007kih.2">
    <property type="organism name" value="mouse"/>
</dbReference>
<dbReference type="AGR" id="MGI:1890646"/>
<dbReference type="CTD" id="284086"/>
<dbReference type="MGI" id="MGI:1890646">
    <property type="gene designation" value="Nek8"/>
</dbReference>
<dbReference type="VEuPathDB" id="HostDB:ENSMUSG00000017405"/>
<dbReference type="eggNOG" id="KOG0589">
    <property type="taxonomic scope" value="Eukaryota"/>
</dbReference>
<dbReference type="GeneTree" id="ENSGT00940000159297"/>
<dbReference type="HOGENOM" id="CLU_000288_123_1_1"/>
<dbReference type="InParanoid" id="Q91ZR4"/>
<dbReference type="OMA" id="CPQQVPV"/>
<dbReference type="OrthoDB" id="248923at2759"/>
<dbReference type="PhylomeDB" id="Q91ZR4"/>
<dbReference type="TreeFam" id="TF106472"/>
<dbReference type="BioGRID-ORCS" id="140859">
    <property type="hits" value="1 hit in 79 CRISPR screens"/>
</dbReference>
<dbReference type="CD-CODE" id="01CA17F3">
    <property type="entry name" value="Centrosome"/>
</dbReference>
<dbReference type="ChiTaRS" id="Nek8">
    <property type="organism name" value="mouse"/>
</dbReference>
<dbReference type="PRO" id="PR:Q91ZR4"/>
<dbReference type="Proteomes" id="UP000000589">
    <property type="component" value="Chromosome 11"/>
</dbReference>
<dbReference type="RNAct" id="Q91ZR4">
    <property type="molecule type" value="protein"/>
</dbReference>
<dbReference type="Bgee" id="ENSMUSG00000017405">
    <property type="expression patterns" value="Expressed in saccule of membranous labyrinth and 148 other cell types or tissues"/>
</dbReference>
<dbReference type="ExpressionAtlas" id="Q91ZR4">
    <property type="expression patterns" value="baseline and differential"/>
</dbReference>
<dbReference type="GO" id="GO:0005813">
    <property type="term" value="C:centrosome"/>
    <property type="evidence" value="ECO:0007669"/>
    <property type="project" value="UniProtKB-SubCell"/>
</dbReference>
<dbReference type="GO" id="GO:0097546">
    <property type="term" value="C:ciliary base"/>
    <property type="evidence" value="ECO:0000314"/>
    <property type="project" value="MGI"/>
</dbReference>
<dbReference type="GO" id="GO:0097543">
    <property type="term" value="C:ciliary inversin compartment"/>
    <property type="evidence" value="ECO:0000314"/>
    <property type="project" value="MGI"/>
</dbReference>
<dbReference type="GO" id="GO:0005929">
    <property type="term" value="C:cilium"/>
    <property type="evidence" value="ECO:0000314"/>
    <property type="project" value="UniProtKB"/>
</dbReference>
<dbReference type="GO" id="GO:0005737">
    <property type="term" value="C:cytoplasm"/>
    <property type="evidence" value="ECO:0007669"/>
    <property type="project" value="UniProtKB-SubCell"/>
</dbReference>
<dbReference type="GO" id="GO:0005524">
    <property type="term" value="F:ATP binding"/>
    <property type="evidence" value="ECO:0007669"/>
    <property type="project" value="UniProtKB-KW"/>
</dbReference>
<dbReference type="GO" id="GO:0046872">
    <property type="term" value="F:metal ion binding"/>
    <property type="evidence" value="ECO:0007669"/>
    <property type="project" value="UniProtKB-KW"/>
</dbReference>
<dbReference type="GO" id="GO:0106310">
    <property type="term" value="F:protein serine kinase activity"/>
    <property type="evidence" value="ECO:0007669"/>
    <property type="project" value="RHEA"/>
</dbReference>
<dbReference type="GO" id="GO:0004674">
    <property type="term" value="F:protein serine/threonine kinase activity"/>
    <property type="evidence" value="ECO:0007669"/>
    <property type="project" value="UniProtKB-KW"/>
</dbReference>
<dbReference type="GO" id="GO:0009887">
    <property type="term" value="P:animal organ morphogenesis"/>
    <property type="evidence" value="ECO:0007669"/>
    <property type="project" value="Ensembl"/>
</dbReference>
<dbReference type="GO" id="GO:0007368">
    <property type="term" value="P:determination of left/right symmetry"/>
    <property type="evidence" value="ECO:0000315"/>
    <property type="project" value="MGI"/>
</dbReference>
<dbReference type="GO" id="GO:0007507">
    <property type="term" value="P:heart development"/>
    <property type="evidence" value="ECO:0000315"/>
    <property type="project" value="MGI"/>
</dbReference>
<dbReference type="GO" id="GO:0035330">
    <property type="term" value="P:regulation of hippo signaling"/>
    <property type="evidence" value="ECO:0007669"/>
    <property type="project" value="Ensembl"/>
</dbReference>
<dbReference type="CDD" id="cd08220">
    <property type="entry name" value="STKc_Nek8"/>
    <property type="match status" value="1"/>
</dbReference>
<dbReference type="FunFam" id="1.10.510.10:FF:000262">
    <property type="entry name" value="Serine/threonine-protein kinase Nek8"/>
    <property type="match status" value="1"/>
</dbReference>
<dbReference type="FunFam" id="2.130.10.30:FF:000017">
    <property type="entry name" value="Serine/threonine-protein kinase Nek8"/>
    <property type="match status" value="1"/>
</dbReference>
<dbReference type="FunFam" id="2.130.10.30:FF:000078">
    <property type="entry name" value="Serine/threonine-protein kinase Nek8"/>
    <property type="match status" value="1"/>
</dbReference>
<dbReference type="FunFam" id="3.30.200.20:FF:000243">
    <property type="entry name" value="serine/threonine-protein kinase Nek8"/>
    <property type="match status" value="1"/>
</dbReference>
<dbReference type="Gene3D" id="3.30.200.20">
    <property type="entry name" value="Phosphorylase Kinase, domain 1"/>
    <property type="match status" value="1"/>
</dbReference>
<dbReference type="Gene3D" id="2.130.10.30">
    <property type="entry name" value="Regulator of chromosome condensation 1/beta-lactamase-inhibitor protein II"/>
    <property type="match status" value="2"/>
</dbReference>
<dbReference type="Gene3D" id="1.10.510.10">
    <property type="entry name" value="Transferase(Phosphotransferase) domain 1"/>
    <property type="match status" value="1"/>
</dbReference>
<dbReference type="InterPro" id="IPR011009">
    <property type="entry name" value="Kinase-like_dom_sf"/>
</dbReference>
<dbReference type="InterPro" id="IPR000719">
    <property type="entry name" value="Prot_kinase_dom"/>
</dbReference>
<dbReference type="InterPro" id="IPR017441">
    <property type="entry name" value="Protein_kinase_ATP_BS"/>
</dbReference>
<dbReference type="InterPro" id="IPR009091">
    <property type="entry name" value="RCC1/BLIP-II"/>
</dbReference>
<dbReference type="InterPro" id="IPR000408">
    <property type="entry name" value="Reg_chr_condens"/>
</dbReference>
<dbReference type="InterPro" id="IPR008271">
    <property type="entry name" value="Ser/Thr_kinase_AS"/>
</dbReference>
<dbReference type="InterPro" id="IPR051997">
    <property type="entry name" value="STK_NEK"/>
</dbReference>
<dbReference type="InterPro" id="IPR044120">
    <property type="entry name" value="STKc_Nek8"/>
</dbReference>
<dbReference type="PANTHER" id="PTHR44535">
    <property type="entry name" value="PROTEIN CBG16200"/>
    <property type="match status" value="1"/>
</dbReference>
<dbReference type="PANTHER" id="PTHR44535:SF4">
    <property type="entry name" value="SERINE_THREONINE-PROTEIN KINASE NEK8"/>
    <property type="match status" value="1"/>
</dbReference>
<dbReference type="Pfam" id="PF00069">
    <property type="entry name" value="Pkinase"/>
    <property type="match status" value="1"/>
</dbReference>
<dbReference type="Pfam" id="PF25390">
    <property type="entry name" value="WD40_RLD"/>
    <property type="match status" value="1"/>
</dbReference>
<dbReference type="PRINTS" id="PR00633">
    <property type="entry name" value="RCCNDNSATION"/>
</dbReference>
<dbReference type="SMART" id="SM00220">
    <property type="entry name" value="S_TKc"/>
    <property type="match status" value="1"/>
</dbReference>
<dbReference type="SUPFAM" id="SSF56112">
    <property type="entry name" value="Protein kinase-like (PK-like)"/>
    <property type="match status" value="1"/>
</dbReference>
<dbReference type="SUPFAM" id="SSF50985">
    <property type="entry name" value="RCC1/BLIP-II"/>
    <property type="match status" value="1"/>
</dbReference>
<dbReference type="PROSITE" id="PS00107">
    <property type="entry name" value="PROTEIN_KINASE_ATP"/>
    <property type="match status" value="1"/>
</dbReference>
<dbReference type="PROSITE" id="PS50011">
    <property type="entry name" value="PROTEIN_KINASE_DOM"/>
    <property type="match status" value="1"/>
</dbReference>
<dbReference type="PROSITE" id="PS00108">
    <property type="entry name" value="PROTEIN_KINASE_ST"/>
    <property type="match status" value="1"/>
</dbReference>
<dbReference type="PROSITE" id="PS50012">
    <property type="entry name" value="RCC1_3"/>
    <property type="match status" value="5"/>
</dbReference>
<name>NEK8_MOUSE</name>